<reference key="1">
    <citation type="submission" date="2006-06" db="EMBL/GenBank/DDBJ databases">
        <title>Complete sequence of Pseudoalteromonas atlantica T6c.</title>
        <authorList>
            <consortium name="US DOE Joint Genome Institute"/>
            <person name="Copeland A."/>
            <person name="Lucas S."/>
            <person name="Lapidus A."/>
            <person name="Barry K."/>
            <person name="Detter J.C."/>
            <person name="Glavina del Rio T."/>
            <person name="Hammon N."/>
            <person name="Israni S."/>
            <person name="Dalin E."/>
            <person name="Tice H."/>
            <person name="Pitluck S."/>
            <person name="Saunders E."/>
            <person name="Brettin T."/>
            <person name="Bruce D."/>
            <person name="Han C."/>
            <person name="Tapia R."/>
            <person name="Gilna P."/>
            <person name="Schmutz J."/>
            <person name="Larimer F."/>
            <person name="Land M."/>
            <person name="Hauser L."/>
            <person name="Kyrpides N."/>
            <person name="Kim E."/>
            <person name="Karls A.C."/>
            <person name="Bartlett D."/>
            <person name="Higgins B.P."/>
            <person name="Richardson P."/>
        </authorList>
    </citation>
    <scope>NUCLEOTIDE SEQUENCE [LARGE SCALE GENOMIC DNA]</scope>
    <source>
        <strain>T6c / ATCC BAA-1087</strain>
    </source>
</reference>
<gene>
    <name evidence="1" type="primary">tsaC</name>
    <name type="synonym">rimN</name>
    <name type="ordered locus">Patl_0028</name>
</gene>
<protein>
    <recommendedName>
        <fullName evidence="1">Threonylcarbamoyl-AMP synthase</fullName>
        <shortName evidence="1">TC-AMP synthase</shortName>
        <ecNumber evidence="1">2.7.7.87</ecNumber>
    </recommendedName>
    <alternativeName>
        <fullName evidence="1">L-threonylcarbamoyladenylate synthase</fullName>
    </alternativeName>
    <alternativeName>
        <fullName evidence="1">t(6)A37 threonylcarbamoyladenosine biosynthesis protein TsaC</fullName>
    </alternativeName>
    <alternativeName>
        <fullName evidence="1">tRNA threonylcarbamoyladenosine biosynthesis protein TsaC</fullName>
    </alternativeName>
</protein>
<name>TSAC_PSEA6</name>
<comment type="function">
    <text evidence="1">Required for the formation of a threonylcarbamoyl group on adenosine at position 37 (t(6)A37) in tRNAs that read codons beginning with adenine. Catalyzes the conversion of L-threonine, HCO(3)(-)/CO(2) and ATP to give threonylcarbamoyl-AMP (TC-AMP) as the acyladenylate intermediate, with the release of diphosphate.</text>
</comment>
<comment type="catalytic activity">
    <reaction evidence="1">
        <text>L-threonine + hydrogencarbonate + ATP = L-threonylcarbamoyladenylate + diphosphate + H2O</text>
        <dbReference type="Rhea" id="RHEA:36407"/>
        <dbReference type="ChEBI" id="CHEBI:15377"/>
        <dbReference type="ChEBI" id="CHEBI:17544"/>
        <dbReference type="ChEBI" id="CHEBI:30616"/>
        <dbReference type="ChEBI" id="CHEBI:33019"/>
        <dbReference type="ChEBI" id="CHEBI:57926"/>
        <dbReference type="ChEBI" id="CHEBI:73682"/>
        <dbReference type="EC" id="2.7.7.87"/>
    </reaction>
</comment>
<comment type="subcellular location">
    <subcellularLocation>
        <location evidence="1">Cytoplasm</location>
    </subcellularLocation>
</comment>
<comment type="similarity">
    <text evidence="1">Belongs to the SUA5 family. TsaC subfamily.</text>
</comment>
<dbReference type="EC" id="2.7.7.87" evidence="1"/>
<dbReference type="EMBL" id="CP000388">
    <property type="protein sequence ID" value="ABG38561.1"/>
    <property type="molecule type" value="Genomic_DNA"/>
</dbReference>
<dbReference type="RefSeq" id="WP_011572975.1">
    <property type="nucleotide sequence ID" value="NC_008228.1"/>
</dbReference>
<dbReference type="SMR" id="Q15ZX7"/>
<dbReference type="STRING" id="342610.Patl_0028"/>
<dbReference type="KEGG" id="pat:Patl_0028"/>
<dbReference type="eggNOG" id="COG0009">
    <property type="taxonomic scope" value="Bacteria"/>
</dbReference>
<dbReference type="HOGENOM" id="CLU_031397_6_0_6"/>
<dbReference type="OrthoDB" id="9814580at2"/>
<dbReference type="Proteomes" id="UP000001981">
    <property type="component" value="Chromosome"/>
</dbReference>
<dbReference type="GO" id="GO:0005737">
    <property type="term" value="C:cytoplasm"/>
    <property type="evidence" value="ECO:0007669"/>
    <property type="project" value="UniProtKB-SubCell"/>
</dbReference>
<dbReference type="GO" id="GO:0005524">
    <property type="term" value="F:ATP binding"/>
    <property type="evidence" value="ECO:0007669"/>
    <property type="project" value="UniProtKB-UniRule"/>
</dbReference>
<dbReference type="GO" id="GO:0003725">
    <property type="term" value="F:double-stranded RNA binding"/>
    <property type="evidence" value="ECO:0007669"/>
    <property type="project" value="InterPro"/>
</dbReference>
<dbReference type="GO" id="GO:0061710">
    <property type="term" value="F:L-threonylcarbamoyladenylate synthase"/>
    <property type="evidence" value="ECO:0007669"/>
    <property type="project" value="UniProtKB-EC"/>
</dbReference>
<dbReference type="GO" id="GO:0000049">
    <property type="term" value="F:tRNA binding"/>
    <property type="evidence" value="ECO:0007669"/>
    <property type="project" value="TreeGrafter"/>
</dbReference>
<dbReference type="GO" id="GO:0006450">
    <property type="term" value="P:regulation of translational fidelity"/>
    <property type="evidence" value="ECO:0007669"/>
    <property type="project" value="TreeGrafter"/>
</dbReference>
<dbReference type="GO" id="GO:0002949">
    <property type="term" value="P:tRNA threonylcarbamoyladenosine modification"/>
    <property type="evidence" value="ECO:0007669"/>
    <property type="project" value="UniProtKB-UniRule"/>
</dbReference>
<dbReference type="FunFam" id="3.90.870.10:FF:000004">
    <property type="entry name" value="Threonylcarbamoyl-AMP synthase"/>
    <property type="match status" value="1"/>
</dbReference>
<dbReference type="Gene3D" id="3.90.870.10">
    <property type="entry name" value="DHBP synthase"/>
    <property type="match status" value="1"/>
</dbReference>
<dbReference type="HAMAP" id="MF_01852">
    <property type="entry name" value="TsaC"/>
    <property type="match status" value="1"/>
</dbReference>
<dbReference type="InterPro" id="IPR017945">
    <property type="entry name" value="DHBP_synth_RibB-like_a/b_dom"/>
</dbReference>
<dbReference type="InterPro" id="IPR006070">
    <property type="entry name" value="Sua5-like_dom"/>
</dbReference>
<dbReference type="InterPro" id="IPR023535">
    <property type="entry name" value="TC-AMP_synthase"/>
</dbReference>
<dbReference type="InterPro" id="IPR050156">
    <property type="entry name" value="TC-AMP_synthase_SUA5"/>
</dbReference>
<dbReference type="PANTHER" id="PTHR17490">
    <property type="entry name" value="SUA5"/>
    <property type="match status" value="1"/>
</dbReference>
<dbReference type="PANTHER" id="PTHR17490:SF18">
    <property type="entry name" value="THREONYLCARBAMOYL-AMP SYNTHASE"/>
    <property type="match status" value="1"/>
</dbReference>
<dbReference type="Pfam" id="PF01300">
    <property type="entry name" value="Sua5_yciO_yrdC"/>
    <property type="match status" value="1"/>
</dbReference>
<dbReference type="SUPFAM" id="SSF55821">
    <property type="entry name" value="YrdC/RibB"/>
    <property type="match status" value="1"/>
</dbReference>
<dbReference type="PROSITE" id="PS51163">
    <property type="entry name" value="YRDC"/>
    <property type="match status" value="1"/>
</dbReference>
<accession>Q15ZX7</accession>
<sequence length="187" mass="20295">MTANHTDDPFLLDYLAGKVFAYPTEAVFGLGCDPDNEQAVNKLLALKQRDVSKGLILVGDNYSQLLPYVDDSAIKMTKRTEIFSSWPGPITWLLPKSKTAPSWVTGESEFIAVRVSAHPLIKDLCQRANKPLVSTSANTAGHPPALSADEVTSYFSNQVILIDGSLGGSRSPSKIRHGHSGQTIRDN</sequence>
<keyword id="KW-0067">ATP-binding</keyword>
<keyword id="KW-0963">Cytoplasm</keyword>
<keyword id="KW-0547">Nucleotide-binding</keyword>
<keyword id="KW-0548">Nucleotidyltransferase</keyword>
<keyword id="KW-0808">Transferase</keyword>
<keyword id="KW-0819">tRNA processing</keyword>
<evidence type="ECO:0000255" key="1">
    <source>
        <dbReference type="HAMAP-Rule" id="MF_01852"/>
    </source>
</evidence>
<evidence type="ECO:0000256" key="2">
    <source>
        <dbReference type="SAM" id="MobiDB-lite"/>
    </source>
</evidence>
<proteinExistence type="inferred from homology"/>
<feature type="chain" id="PRO_0000352946" description="Threonylcarbamoyl-AMP synthase">
    <location>
        <begin position="1"/>
        <end position="187"/>
    </location>
</feature>
<feature type="domain" description="YrdC-like" evidence="1">
    <location>
        <begin position="4"/>
        <end position="187"/>
    </location>
</feature>
<feature type="region of interest" description="Disordered" evidence="2">
    <location>
        <begin position="168"/>
        <end position="187"/>
    </location>
</feature>
<organism>
    <name type="scientific">Pseudoalteromonas atlantica (strain T6c / ATCC BAA-1087)</name>
    <dbReference type="NCBI Taxonomy" id="3042615"/>
    <lineage>
        <taxon>Bacteria</taxon>
        <taxon>Pseudomonadati</taxon>
        <taxon>Pseudomonadota</taxon>
        <taxon>Gammaproteobacteria</taxon>
        <taxon>Alteromonadales</taxon>
        <taxon>Alteromonadaceae</taxon>
        <taxon>Paraglaciecola</taxon>
    </lineage>
</organism>